<protein>
    <recommendedName>
        <fullName>Uncharacterized protein Gp-e</fullName>
    </recommendedName>
</protein>
<organism>
    <name type="scientific">Pseudoalteromonas phage PM2</name>
    <name type="common">Bacteriophage PM2</name>
    <dbReference type="NCBI Taxonomy" id="2905728"/>
    <lineage>
        <taxon>Viruses</taxon>
        <taxon>Varidnaviria</taxon>
        <taxon>Bamfordvirae</taxon>
        <taxon>Preplasmiviricota</taxon>
        <taxon>Tectiliviricetes</taxon>
        <taxon>Vinavirales</taxon>
        <taxon>Corticoviridae</taxon>
        <taxon>Corticovirus</taxon>
        <taxon>Corticovirus PM2</taxon>
    </lineage>
</organism>
<dbReference type="EMBL" id="AF155037">
    <property type="protein sequence ID" value="AAD43542.1"/>
    <property type="molecule type" value="Genomic_DNA"/>
</dbReference>
<dbReference type="RefSeq" id="NP_049895.1">
    <property type="nucleotide sequence ID" value="NC_000867.1"/>
</dbReference>
<dbReference type="SMR" id="Q9XJS4"/>
<dbReference type="KEGG" id="vg:1262036"/>
<dbReference type="Proteomes" id="UP000002136">
    <property type="component" value="Genome"/>
</dbReference>
<sequence length="80" mass="8864">MSQRGISKGLLVCHSVRLAKVWVDQIEISIPLGVEPEPKQIEGISDLIDSLHSYDCSVCSVVAHKLDDAMCRWCELLLDA</sequence>
<name>GPE_BPPM2</name>
<keyword id="KW-1185">Reference proteome</keyword>
<accession>Q9XJS4</accession>
<gene>
    <name type="ORF">e</name>
</gene>
<proteinExistence type="predicted"/>
<reference key="1">
    <citation type="journal article" date="1999" name="Virology">
        <title>The complete genome sequence of PM2, the first lipid-containing bacterial virus to be isolated.</title>
        <authorList>
            <person name="Maennistoe R.H."/>
            <person name="Kivelae H.M."/>
            <person name="Paulin L."/>
            <person name="Bamford D.H."/>
            <person name="Bamford J.K."/>
        </authorList>
    </citation>
    <scope>NUCLEOTIDE SEQUENCE [GENOMIC DNA]</scope>
</reference>
<organismHost>
    <name type="scientific">Pseudoalteromonas espejiana</name>
    <dbReference type="NCBI Taxonomy" id="28107"/>
</organismHost>
<feature type="chain" id="PRO_0000339914" description="Uncharacterized protein Gp-e">
    <location>
        <begin position="1"/>
        <end position="80"/>
    </location>
</feature>